<gene>
    <name evidence="1" type="primary">pyrE</name>
    <name type="ordered locus">Pisl_0506</name>
</gene>
<evidence type="ECO:0000255" key="1">
    <source>
        <dbReference type="HAMAP-Rule" id="MF_01208"/>
    </source>
</evidence>
<protein>
    <recommendedName>
        <fullName evidence="1">Orotate phosphoribosyltransferase</fullName>
        <shortName evidence="1">OPRT</shortName>
        <shortName evidence="1">OPRTase</shortName>
        <ecNumber evidence="1">2.4.2.10</ecNumber>
    </recommendedName>
</protein>
<feature type="chain" id="PRO_0000298890" description="Orotate phosphoribosyltransferase">
    <location>
        <begin position="1"/>
        <end position="193"/>
    </location>
</feature>
<feature type="binding site" evidence="1">
    <location>
        <position position="85"/>
    </location>
    <ligand>
        <name>5-phospho-alpha-D-ribose 1-diphosphate</name>
        <dbReference type="ChEBI" id="CHEBI:58017"/>
        <note>ligand shared between dimeric partners</note>
    </ligand>
</feature>
<feature type="binding site" evidence="1">
    <location>
        <position position="89"/>
    </location>
    <ligand>
        <name>5-phospho-alpha-D-ribose 1-diphosphate</name>
        <dbReference type="ChEBI" id="CHEBI:58017"/>
        <note>ligand shared between dimeric partners</note>
    </ligand>
</feature>
<feature type="binding site" evidence="1">
    <location>
        <position position="91"/>
    </location>
    <ligand>
        <name>5-phospho-alpha-D-ribose 1-diphosphate</name>
        <dbReference type="ChEBI" id="CHEBI:58017"/>
        <note>ligand shared between dimeric partners</note>
    </ligand>
</feature>
<feature type="binding site" description="in other chain" evidence="1">
    <location>
        <begin position="111"/>
        <end position="119"/>
    </location>
    <ligand>
        <name>5-phospho-alpha-D-ribose 1-diphosphate</name>
        <dbReference type="ChEBI" id="CHEBI:58017"/>
        <note>ligand shared between dimeric partners</note>
    </ligand>
</feature>
<feature type="binding site" evidence="1">
    <location>
        <position position="115"/>
    </location>
    <ligand>
        <name>orotate</name>
        <dbReference type="ChEBI" id="CHEBI:30839"/>
    </ligand>
</feature>
<feature type="binding site" evidence="1">
    <location>
        <position position="143"/>
    </location>
    <ligand>
        <name>orotate</name>
        <dbReference type="ChEBI" id="CHEBI:30839"/>
    </ligand>
</feature>
<comment type="function">
    <text evidence="1">Catalyzes the transfer of a ribosyl phosphate group from 5-phosphoribose 1-diphosphate to orotate, leading to the formation of orotidine monophosphate (OMP).</text>
</comment>
<comment type="catalytic activity">
    <reaction evidence="1">
        <text>orotidine 5'-phosphate + diphosphate = orotate + 5-phospho-alpha-D-ribose 1-diphosphate</text>
        <dbReference type="Rhea" id="RHEA:10380"/>
        <dbReference type="ChEBI" id="CHEBI:30839"/>
        <dbReference type="ChEBI" id="CHEBI:33019"/>
        <dbReference type="ChEBI" id="CHEBI:57538"/>
        <dbReference type="ChEBI" id="CHEBI:58017"/>
        <dbReference type="EC" id="2.4.2.10"/>
    </reaction>
</comment>
<comment type="cofactor">
    <cofactor evidence="1">
        <name>Mg(2+)</name>
        <dbReference type="ChEBI" id="CHEBI:18420"/>
    </cofactor>
</comment>
<comment type="pathway">
    <text evidence="1">Pyrimidine metabolism; UMP biosynthesis via de novo pathway; UMP from orotate: step 1/2.</text>
</comment>
<comment type="subunit">
    <text evidence="1">Homodimer.</text>
</comment>
<comment type="similarity">
    <text evidence="1">Belongs to the purine/pyrimidine phosphoribosyltransferase family. PyrE subfamily.</text>
</comment>
<sequence>MIEKFLELGVVKFGIFRLSSGLESPFYIDLRNVLGEPELLRWVIEQYREILLRLKFDIIVGVATGGIPYASILGYTLGKPISYVRPEAKEHGTGRLIEGAEVSGREVVVIDDVLTTGKSIIGAINAIRSAGGIVAGAVVFLDREQCGSRNIKTATGVEVYSVYKMRGLLDRLKDYIDEEQYRSVINYLAQWRC</sequence>
<keyword id="KW-0328">Glycosyltransferase</keyword>
<keyword id="KW-0460">Magnesium</keyword>
<keyword id="KW-0665">Pyrimidine biosynthesis</keyword>
<keyword id="KW-0808">Transferase</keyword>
<reference key="1">
    <citation type="submission" date="2006-12" db="EMBL/GenBank/DDBJ databases">
        <title>Complete sequence of Pyrobaculum islandicum DSM 4184.</title>
        <authorList>
            <person name="Copeland A."/>
            <person name="Lucas S."/>
            <person name="Lapidus A."/>
            <person name="Barry K."/>
            <person name="Detter J.C."/>
            <person name="Glavina del Rio T."/>
            <person name="Dalin E."/>
            <person name="Tice H."/>
            <person name="Pitluck S."/>
            <person name="Meincke L."/>
            <person name="Brettin T."/>
            <person name="Bruce D."/>
            <person name="Han C."/>
            <person name="Tapia R."/>
            <person name="Gilna P."/>
            <person name="Schmutz J."/>
            <person name="Larimer F."/>
            <person name="Land M."/>
            <person name="Hauser L."/>
            <person name="Kyrpides N."/>
            <person name="Mikhailova N."/>
            <person name="Cozen A.E."/>
            <person name="Fitz-Gibbon S.T."/>
            <person name="House C.H."/>
            <person name="Saltikov C."/>
            <person name="Lowe T."/>
            <person name="Richardson P."/>
        </authorList>
    </citation>
    <scope>NUCLEOTIDE SEQUENCE [LARGE SCALE GENOMIC DNA]</scope>
    <source>
        <strain>DSM 4184 / JCM 9189 / GEO3</strain>
    </source>
</reference>
<organism>
    <name type="scientific">Pyrobaculum islandicum (strain DSM 4184 / JCM 9189 / GEO3)</name>
    <dbReference type="NCBI Taxonomy" id="384616"/>
    <lineage>
        <taxon>Archaea</taxon>
        <taxon>Thermoproteota</taxon>
        <taxon>Thermoprotei</taxon>
        <taxon>Thermoproteales</taxon>
        <taxon>Thermoproteaceae</taxon>
        <taxon>Pyrobaculum</taxon>
    </lineage>
</organism>
<proteinExistence type="inferred from homology"/>
<name>PYRE_PYRIL</name>
<accession>A1RRV2</accession>
<dbReference type="EC" id="2.4.2.10" evidence="1"/>
<dbReference type="EMBL" id="CP000504">
    <property type="protein sequence ID" value="ABL87684.1"/>
    <property type="molecule type" value="Genomic_DNA"/>
</dbReference>
<dbReference type="RefSeq" id="WP_011762261.1">
    <property type="nucleotide sequence ID" value="NC_008701.1"/>
</dbReference>
<dbReference type="SMR" id="A1RRV2"/>
<dbReference type="STRING" id="384616.Pisl_0506"/>
<dbReference type="GeneID" id="4618269"/>
<dbReference type="KEGG" id="pis:Pisl_0506"/>
<dbReference type="eggNOG" id="arCOG00029">
    <property type="taxonomic scope" value="Archaea"/>
</dbReference>
<dbReference type="HOGENOM" id="CLU_074878_2_0_2"/>
<dbReference type="OrthoDB" id="9089at2157"/>
<dbReference type="UniPathway" id="UPA00070">
    <property type="reaction ID" value="UER00119"/>
</dbReference>
<dbReference type="Proteomes" id="UP000002595">
    <property type="component" value="Chromosome"/>
</dbReference>
<dbReference type="GO" id="GO:0000287">
    <property type="term" value="F:magnesium ion binding"/>
    <property type="evidence" value="ECO:0007669"/>
    <property type="project" value="UniProtKB-UniRule"/>
</dbReference>
<dbReference type="GO" id="GO:0004588">
    <property type="term" value="F:orotate phosphoribosyltransferase activity"/>
    <property type="evidence" value="ECO:0007669"/>
    <property type="project" value="UniProtKB-UniRule"/>
</dbReference>
<dbReference type="GO" id="GO:0044205">
    <property type="term" value="P:'de novo' UMP biosynthetic process"/>
    <property type="evidence" value="ECO:0007669"/>
    <property type="project" value="UniProtKB-UniRule"/>
</dbReference>
<dbReference type="GO" id="GO:0019856">
    <property type="term" value="P:pyrimidine nucleobase biosynthetic process"/>
    <property type="evidence" value="ECO:0007669"/>
    <property type="project" value="TreeGrafter"/>
</dbReference>
<dbReference type="CDD" id="cd06223">
    <property type="entry name" value="PRTases_typeI"/>
    <property type="match status" value="1"/>
</dbReference>
<dbReference type="Gene3D" id="3.40.50.2020">
    <property type="match status" value="1"/>
</dbReference>
<dbReference type="HAMAP" id="MF_01208">
    <property type="entry name" value="PyrE"/>
    <property type="match status" value="1"/>
</dbReference>
<dbReference type="InterPro" id="IPR023031">
    <property type="entry name" value="OPRT"/>
</dbReference>
<dbReference type="InterPro" id="IPR004467">
    <property type="entry name" value="Or_phspho_trans_dom"/>
</dbReference>
<dbReference type="InterPro" id="IPR000836">
    <property type="entry name" value="PRibTrfase_dom"/>
</dbReference>
<dbReference type="InterPro" id="IPR029057">
    <property type="entry name" value="PRTase-like"/>
</dbReference>
<dbReference type="NCBIfam" id="TIGR00336">
    <property type="entry name" value="pyrE"/>
    <property type="match status" value="1"/>
</dbReference>
<dbReference type="PANTHER" id="PTHR19278">
    <property type="entry name" value="OROTATE PHOSPHORIBOSYLTRANSFERASE"/>
    <property type="match status" value="1"/>
</dbReference>
<dbReference type="PANTHER" id="PTHR19278:SF9">
    <property type="entry name" value="URIDINE 5'-MONOPHOSPHATE SYNTHASE"/>
    <property type="match status" value="1"/>
</dbReference>
<dbReference type="Pfam" id="PF00156">
    <property type="entry name" value="Pribosyltran"/>
    <property type="match status" value="1"/>
</dbReference>
<dbReference type="SUPFAM" id="SSF53271">
    <property type="entry name" value="PRTase-like"/>
    <property type="match status" value="1"/>
</dbReference>
<dbReference type="PROSITE" id="PS00103">
    <property type="entry name" value="PUR_PYR_PR_TRANSFER"/>
    <property type="match status" value="1"/>
</dbReference>